<comment type="function">
    <text evidence="1 3">Plays a role in coupling actin fibers to cell junctions in endothelial cells, via its interaction with AMOTL2 and CDH5 (By similarity). May regulate acid-induced ASIC3 currents by modulating its expression at the cell surface (By similarity).</text>
</comment>
<comment type="subunit">
    <text evidence="2 3 8 10 11 12 13 14 15 16 17 18">Part of a complex composed of AMOTL2, MAGI1 and CDH5, within the complex AMOTL2 acts as a scaffold protein for the interaction of MAGI1 with CDH5 (By similarity). The complex is required for coupling actin fibers to cell junctions in endothelial cells (By similarity). Interacts through its WW 2 domain with SYNPO and through its PDZ 5 domain with ACTN4 (PubMed:12042308). Interacts with cytoplasmic domain of ADGRB1 (PubMed:9647739). Interacts via its WW domains with DRPLA (PubMed:9647693). Interacts with ESAM, LRP2 and CXADR (By similarity). May interact with CTNNB1 (By similarity). Interacts through its PDZ 1 domain with NET1 (By similarity). Interacts with ASIC3 and AMOT (PubMed:15317815, PubMed:16043488). Interacts with FCHSD2 (PubMed:14627983). Interacts with IGSF5/JAM4 and through its PDZ 2 and 3 domains with NPHS1 forming a tripartite complex (By similarity) (PubMed:12773569). Interacts with DDN (PubMed:16751601). Interacts with DLL1 (By similarity). Interacts with KCNJ10 and possibly with KCNJ10/KCNJ16 heterodimer; this interaction may facilitate KCNJ10/KCNJ16 potassium channel expression at the basolateral membrane in kidney tubular cells. Interacts with PRRG4 (via cytoplasmic domain) (PubMed:23873930).</text>
</comment>
<comment type="subunit">
    <molecule>Isoform 3</molecule>
    <text evidence="8">Interacts (via PDZ domain) with RAPGEF2.</text>
</comment>
<comment type="interaction">
    <interactant intactId="EBI-924464">
        <id>Q96QZ7</id>
    </interactant>
    <interactant intactId="EBI-1215612">
        <id>O94868</id>
        <label>FCHSD2</label>
    </interactant>
    <organismsDiffer>false</organismsDiffer>
    <experiments>5</experiments>
</comment>
<comment type="interaction">
    <interactant intactId="EBI-924464">
        <id>Q96QZ7</id>
    </interactant>
    <interactant intactId="EBI-297509">
        <id>P46940</id>
        <label>IQGAP1</label>
    </interactant>
    <organismsDiffer>false</organismsDiffer>
    <experiments>4</experiments>
</comment>
<comment type="interaction">
    <interactant intactId="EBI-924464">
        <id>Q96QZ7</id>
    </interactant>
    <interactant intactId="EBI-465669">
        <id>O60333-3</id>
        <label>KIF1B</label>
    </interactant>
    <organismsDiffer>false</organismsDiffer>
    <experiments>3</experiments>
</comment>
<comment type="interaction">
    <interactant intactId="EBI-924464">
        <id>Q96QZ7</id>
    </interactant>
    <interactant intactId="EBI-3918643">
        <id>Q9BZD6</id>
        <label>PRRG4</label>
    </interactant>
    <organismsDiffer>false</organismsDiffer>
    <experiments>2</experiments>
</comment>
<comment type="interaction">
    <interactant intactId="EBI-924464">
        <id>Q96QZ7</id>
    </interactant>
    <interactant intactId="EBI-1177242">
        <id>P03126</id>
        <label>E6</label>
    </interactant>
    <organismsDiffer>true</organismsDiffer>
    <experiments>2</experiments>
</comment>
<comment type="interaction">
    <interactant intactId="EBI-924464">
        <id>Q96QZ7</id>
    </interactant>
    <interactant intactId="EBI-1186926">
        <id>P06463</id>
        <label>E6</label>
    </interactant>
    <organismsDiffer>true</organismsDiffer>
    <experiments>4</experiments>
</comment>
<comment type="interaction">
    <interactant intactId="EBI-924464">
        <id>Q96QZ7</id>
    </interactant>
    <interactant intactId="EBI-25567776">
        <id>P0DOF2</id>
        <label>M</label>
    </interactant>
    <organismsDiffer>true</organismsDiffer>
    <experiments>2</experiments>
</comment>
<comment type="interaction">
    <interactant intactId="EBI-8769674">
        <id>Q96QZ7-3</id>
    </interactant>
    <interactant intactId="EBI-307079">
        <id>Q9Y4G8</id>
        <label>RAPGEF2</label>
    </interactant>
    <organismsDiffer>false</organismsDiffer>
    <experiments>2</experiments>
</comment>
<comment type="interaction">
    <interactant intactId="EBI-8769674">
        <id>Q96QZ7-3</id>
    </interactant>
    <interactant intactId="EBI-745409">
        <id>Q9BPW5</id>
        <label>RASL11B</label>
    </interactant>
    <organismsDiffer>false</organismsDiffer>
    <experiments>3</experiments>
</comment>
<comment type="subcellular location">
    <subcellularLocation>
        <location evidence="9">Cell junction</location>
        <location evidence="9">Tight junction</location>
    </subcellularLocation>
    <subcellularLocation>
        <location evidence="9">Cell membrane</location>
        <topology evidence="9">Peripheral membrane protein</topology>
    </subcellularLocation>
    <text>Localizes to epithelial cells tight junctions.</text>
</comment>
<comment type="alternative products">
    <event type="alternative splicing"/>
    <isoform>
        <id>Q96QZ7-1</id>
        <name>1</name>
        <name>MAGI-1C-alpha-beta1</name>
        <sequence type="displayed"/>
    </isoform>
    <isoform>
        <id>Q96QZ7-2</id>
        <name>2</name>
        <name>MAGI-1C-beta</name>
        <sequence type="described" ref="VSP_011664 VSP_011666"/>
    </isoform>
    <isoform>
        <id>Q96QZ7-3</id>
        <name>3</name>
        <name>MAGI-1A-alpha-beta1</name>
        <sequence type="described" ref="VSP_011670 VSP_011671 VSP_011672"/>
    </isoform>
    <isoform>
        <id>Q96QZ7-4</id>
        <name>4</name>
        <name>MAGI-1A-alpha</name>
        <sequence type="described" ref="VSP_011664 VSP_011666 VSP_011667 VSP_011668 VSP_011670 VSP_011671 VSP_011672"/>
    </isoform>
    <isoform>
        <id>Q96QZ7-5</id>
        <name>5</name>
        <name>MAGI-1B-alpha-beta</name>
        <sequence type="described" ref="VSP_011666 VSP_011669 VSP_011672"/>
    </isoform>
    <isoform>
        <id>Q96QZ7-6</id>
        <name>6</name>
        <name>MAGI-1C-beta2</name>
        <sequence type="described" ref="VSP_011664 VSP_011666 VSP_011667"/>
    </isoform>
    <isoform>
        <id>Q96QZ7-7</id>
        <name>7</name>
        <name>MAGI-1C-beta3</name>
        <sequence type="described" ref="VSP_011664 VSP_011665"/>
    </isoform>
    <text>Additional isoforms seem to exist.</text>
</comment>
<comment type="tissue specificity">
    <text evidence="9 17 18">Widely expressed with the exception of skeletal muscle. Isoform 1, isoform 2 and isoform 6 are highly expressed in colon, kidney, lung, liver, and pancreas. Isoform 5 is predominantly expressed in brain and heart. Isoform 3 and isoform 4 are highly expressed in pancreas and brain.</text>
</comment>
<keyword id="KW-0002">3D-structure</keyword>
<keyword id="KW-0025">Alternative splicing</keyword>
<keyword id="KW-0067">ATP-binding</keyword>
<keyword id="KW-0965">Cell junction</keyword>
<keyword id="KW-1003">Cell membrane</keyword>
<keyword id="KW-0472">Membrane</keyword>
<keyword id="KW-0547">Nucleotide-binding</keyword>
<keyword id="KW-0597">Phosphoprotein</keyword>
<keyword id="KW-1267">Proteomics identification</keyword>
<keyword id="KW-1185">Reference proteome</keyword>
<keyword id="KW-0677">Repeat</keyword>
<keyword id="KW-0796">Tight junction</keyword>
<reference key="1">
    <citation type="journal article" date="1998" name="Biochem. Biophys. Res. Commun.">
        <title>Cloning and characterization of BAI-associated protein 1: a PDZ domain-containing protein that interacts with BAI1.</title>
        <authorList>
            <person name="Shiratsuchi T."/>
            <person name="Futamura M."/>
            <person name="Oda K."/>
            <person name="Nishimori H."/>
            <person name="Nakamura Y."/>
            <person name="Tokino T."/>
        </authorList>
    </citation>
    <scope>NUCLEOTIDE SEQUENCE [MRNA] (ISOFORM 3)</scope>
    <scope>TISSUE SPECIFICITY</scope>
    <scope>INTERACTION WITH ADGRB1</scope>
    <source>
        <tissue>Brain</tissue>
    </source>
</reference>
<reference key="2">
    <citation type="journal article" date="2002" name="Exp. Cell Res.">
        <title>MAGI-1: a widely expressed, alternatively spliced tight junction protein.</title>
        <authorList>
            <person name="Laura R.P."/>
            <person name="Ross S."/>
            <person name="Koeppen H."/>
            <person name="Lasky L.A."/>
        </authorList>
    </citation>
    <scope>NUCLEOTIDE SEQUENCE [MRNA] (ISOFORMS 2; 4 AND 5)</scope>
    <scope>ALTERNATIVE SPLICING (ISOFORMS 6 AND 7)</scope>
    <scope>SUBCELLULAR LOCATION</scope>
    <scope>PHOSPHORYLATION</scope>
    <scope>TISSUE SPECIFICITY</scope>
</reference>
<reference key="3">
    <citation type="journal article" date="2004" name="Nat. Genet.">
        <title>Complete sequencing and characterization of 21,243 full-length human cDNAs.</title>
        <authorList>
            <person name="Ota T."/>
            <person name="Suzuki Y."/>
            <person name="Nishikawa T."/>
            <person name="Otsuki T."/>
            <person name="Sugiyama T."/>
            <person name="Irie R."/>
            <person name="Wakamatsu A."/>
            <person name="Hayashi K."/>
            <person name="Sato H."/>
            <person name="Nagai K."/>
            <person name="Kimura K."/>
            <person name="Makita H."/>
            <person name="Sekine M."/>
            <person name="Obayashi M."/>
            <person name="Nishi T."/>
            <person name="Shibahara T."/>
            <person name="Tanaka T."/>
            <person name="Ishii S."/>
            <person name="Yamamoto J."/>
            <person name="Saito K."/>
            <person name="Kawai Y."/>
            <person name="Isono Y."/>
            <person name="Nakamura Y."/>
            <person name="Nagahari K."/>
            <person name="Murakami K."/>
            <person name="Yasuda T."/>
            <person name="Iwayanagi T."/>
            <person name="Wagatsuma M."/>
            <person name="Shiratori A."/>
            <person name="Sudo H."/>
            <person name="Hosoiri T."/>
            <person name="Kaku Y."/>
            <person name="Kodaira H."/>
            <person name="Kondo H."/>
            <person name="Sugawara M."/>
            <person name="Takahashi M."/>
            <person name="Kanda K."/>
            <person name="Yokoi T."/>
            <person name="Furuya T."/>
            <person name="Kikkawa E."/>
            <person name="Omura Y."/>
            <person name="Abe K."/>
            <person name="Kamihara K."/>
            <person name="Katsuta N."/>
            <person name="Sato K."/>
            <person name="Tanikawa M."/>
            <person name="Yamazaki M."/>
            <person name="Ninomiya K."/>
            <person name="Ishibashi T."/>
            <person name="Yamashita H."/>
            <person name="Murakawa K."/>
            <person name="Fujimori K."/>
            <person name="Tanai H."/>
            <person name="Kimata M."/>
            <person name="Watanabe M."/>
            <person name="Hiraoka S."/>
            <person name="Chiba Y."/>
            <person name="Ishida S."/>
            <person name="Ono Y."/>
            <person name="Takiguchi S."/>
            <person name="Watanabe S."/>
            <person name="Yosida M."/>
            <person name="Hotuta T."/>
            <person name="Kusano J."/>
            <person name="Kanehori K."/>
            <person name="Takahashi-Fujii A."/>
            <person name="Hara H."/>
            <person name="Tanase T.-O."/>
            <person name="Nomura Y."/>
            <person name="Togiya S."/>
            <person name="Komai F."/>
            <person name="Hara R."/>
            <person name="Takeuchi K."/>
            <person name="Arita M."/>
            <person name="Imose N."/>
            <person name="Musashino K."/>
            <person name="Yuuki H."/>
            <person name="Oshima A."/>
            <person name="Sasaki N."/>
            <person name="Aotsuka S."/>
            <person name="Yoshikawa Y."/>
            <person name="Matsunawa H."/>
            <person name="Ichihara T."/>
            <person name="Shiohata N."/>
            <person name="Sano S."/>
            <person name="Moriya S."/>
            <person name="Momiyama H."/>
            <person name="Satoh N."/>
            <person name="Takami S."/>
            <person name="Terashima Y."/>
            <person name="Suzuki O."/>
            <person name="Nakagawa S."/>
            <person name="Senoh A."/>
            <person name="Mizoguchi H."/>
            <person name="Goto Y."/>
            <person name="Shimizu F."/>
            <person name="Wakebe H."/>
            <person name="Hishigaki H."/>
            <person name="Watanabe T."/>
            <person name="Sugiyama A."/>
            <person name="Takemoto M."/>
            <person name="Kawakami B."/>
            <person name="Yamazaki M."/>
            <person name="Watanabe K."/>
            <person name="Kumagai A."/>
            <person name="Itakura S."/>
            <person name="Fukuzumi Y."/>
            <person name="Fujimori Y."/>
            <person name="Komiyama M."/>
            <person name="Tashiro H."/>
            <person name="Tanigami A."/>
            <person name="Fujiwara T."/>
            <person name="Ono T."/>
            <person name="Yamada K."/>
            <person name="Fujii Y."/>
            <person name="Ozaki K."/>
            <person name="Hirao M."/>
            <person name="Ohmori Y."/>
            <person name="Kawabata A."/>
            <person name="Hikiji T."/>
            <person name="Kobatake N."/>
            <person name="Inagaki H."/>
            <person name="Ikema Y."/>
            <person name="Okamoto S."/>
            <person name="Okitani R."/>
            <person name="Kawakami T."/>
            <person name="Noguchi S."/>
            <person name="Itoh T."/>
            <person name="Shigeta K."/>
            <person name="Senba T."/>
            <person name="Matsumura K."/>
            <person name="Nakajima Y."/>
            <person name="Mizuno T."/>
            <person name="Morinaga M."/>
            <person name="Sasaki M."/>
            <person name="Togashi T."/>
            <person name="Oyama M."/>
            <person name="Hata H."/>
            <person name="Watanabe M."/>
            <person name="Komatsu T."/>
            <person name="Mizushima-Sugano J."/>
            <person name="Satoh T."/>
            <person name="Shirai Y."/>
            <person name="Takahashi Y."/>
            <person name="Nakagawa K."/>
            <person name="Okumura K."/>
            <person name="Nagase T."/>
            <person name="Nomura N."/>
            <person name="Kikuchi H."/>
            <person name="Masuho Y."/>
            <person name="Yamashita R."/>
            <person name="Nakai K."/>
            <person name="Yada T."/>
            <person name="Nakamura Y."/>
            <person name="Ohara O."/>
            <person name="Isogai T."/>
            <person name="Sugano S."/>
        </authorList>
    </citation>
    <scope>NUCLEOTIDE SEQUENCE [LARGE SCALE MRNA] (ISOFORM 3)</scope>
    <source>
        <tissue>Brain</tissue>
    </source>
</reference>
<reference key="4">
    <citation type="journal article" date="2006" name="Nature">
        <title>The DNA sequence, annotation and analysis of human chromosome 3.</title>
        <authorList>
            <person name="Muzny D.M."/>
            <person name="Scherer S.E."/>
            <person name="Kaul R."/>
            <person name="Wang J."/>
            <person name="Yu J."/>
            <person name="Sudbrak R."/>
            <person name="Buhay C.J."/>
            <person name="Chen R."/>
            <person name="Cree A."/>
            <person name="Ding Y."/>
            <person name="Dugan-Rocha S."/>
            <person name="Gill R."/>
            <person name="Gunaratne P."/>
            <person name="Harris R.A."/>
            <person name="Hawes A.C."/>
            <person name="Hernandez J."/>
            <person name="Hodgson A.V."/>
            <person name="Hume J."/>
            <person name="Jackson A."/>
            <person name="Khan Z.M."/>
            <person name="Kovar-Smith C."/>
            <person name="Lewis L.R."/>
            <person name="Lozado R.J."/>
            <person name="Metzker M.L."/>
            <person name="Milosavljevic A."/>
            <person name="Miner G.R."/>
            <person name="Morgan M.B."/>
            <person name="Nazareth L.V."/>
            <person name="Scott G."/>
            <person name="Sodergren E."/>
            <person name="Song X.-Z."/>
            <person name="Steffen D."/>
            <person name="Wei S."/>
            <person name="Wheeler D.A."/>
            <person name="Wright M.W."/>
            <person name="Worley K.C."/>
            <person name="Yuan Y."/>
            <person name="Zhang Z."/>
            <person name="Adams C.Q."/>
            <person name="Ansari-Lari M.A."/>
            <person name="Ayele M."/>
            <person name="Brown M.J."/>
            <person name="Chen G."/>
            <person name="Chen Z."/>
            <person name="Clendenning J."/>
            <person name="Clerc-Blankenburg K.P."/>
            <person name="Chen R."/>
            <person name="Chen Z."/>
            <person name="Davis C."/>
            <person name="Delgado O."/>
            <person name="Dinh H.H."/>
            <person name="Dong W."/>
            <person name="Draper H."/>
            <person name="Ernst S."/>
            <person name="Fu G."/>
            <person name="Gonzalez-Garay M.L."/>
            <person name="Garcia D.K."/>
            <person name="Gillett W."/>
            <person name="Gu J."/>
            <person name="Hao B."/>
            <person name="Haugen E."/>
            <person name="Havlak P."/>
            <person name="He X."/>
            <person name="Hennig S."/>
            <person name="Hu S."/>
            <person name="Huang W."/>
            <person name="Jackson L.R."/>
            <person name="Jacob L.S."/>
            <person name="Kelly S.H."/>
            <person name="Kube M."/>
            <person name="Levy R."/>
            <person name="Li Z."/>
            <person name="Liu B."/>
            <person name="Liu J."/>
            <person name="Liu W."/>
            <person name="Lu J."/>
            <person name="Maheshwari M."/>
            <person name="Nguyen B.-V."/>
            <person name="Okwuonu G.O."/>
            <person name="Palmeiri A."/>
            <person name="Pasternak S."/>
            <person name="Perez L.M."/>
            <person name="Phelps K.A."/>
            <person name="Plopper F.J."/>
            <person name="Qiang B."/>
            <person name="Raymond C."/>
            <person name="Rodriguez R."/>
            <person name="Saenphimmachak C."/>
            <person name="Santibanez J."/>
            <person name="Shen H."/>
            <person name="Shen Y."/>
            <person name="Subramanian S."/>
            <person name="Tabor P.E."/>
            <person name="Verduzco D."/>
            <person name="Waldron L."/>
            <person name="Wang J."/>
            <person name="Wang J."/>
            <person name="Wang Q."/>
            <person name="Williams G.A."/>
            <person name="Wong G.K.-S."/>
            <person name="Yao Z."/>
            <person name="Zhang J."/>
            <person name="Zhang X."/>
            <person name="Zhao G."/>
            <person name="Zhou J."/>
            <person name="Zhou Y."/>
            <person name="Nelson D."/>
            <person name="Lehrach H."/>
            <person name="Reinhardt R."/>
            <person name="Naylor S.L."/>
            <person name="Yang H."/>
            <person name="Olson M."/>
            <person name="Weinstock G."/>
            <person name="Gibbs R.A."/>
        </authorList>
    </citation>
    <scope>NUCLEOTIDE SEQUENCE [LARGE SCALE GENOMIC DNA]</scope>
</reference>
<reference key="5">
    <citation type="journal article" date="1998" name="Mol. Cell. Neurosci.">
        <title>Atrophin-1, the DRPLA gene product, interacts with two families of WW domain-containing proteins.</title>
        <authorList>
            <person name="Wood J.D."/>
            <person name="Yuan J."/>
            <person name="Margolis R.L."/>
            <person name="Colomer V."/>
            <person name="Duan K."/>
            <person name="Kushi J."/>
            <person name="Kaminsky Z."/>
            <person name="Kleiderlein J.J. Jr."/>
            <person name="Sharp A.H."/>
            <person name="Ross C.A."/>
        </authorList>
    </citation>
    <scope>NUCLEOTIDE SEQUENCE [MRNA] OF 150-826 (ISOFORMS 1/3)</scope>
    <scope>TISSUE SPECIFICITY</scope>
    <scope>INTERACTION WITH DRPLA</scope>
</reference>
<reference key="6">
    <citation type="journal article" date="1997" name="J. Biol. Chem.">
        <title>Identification of novel human WW domain-containing proteins by cloning of ligand targets.</title>
        <authorList>
            <person name="Pirozzi G."/>
            <person name="McConnell S.J."/>
            <person name="Uveges A.J."/>
            <person name="Carter J.M."/>
            <person name="Sparks A.B."/>
            <person name="Kay B.K."/>
            <person name="Fowlkes D.M."/>
        </authorList>
    </citation>
    <scope>NUCLEOTIDE SEQUENCE [MRNA] OF 152-371</scope>
</reference>
<reference key="7">
    <citation type="journal article" date="2000" name="Genes Cells">
        <title>Membrane-associated guanylate kinase with inverted orientation (MAGI)-1/brain angiogenesis inhibitor 1-associated protein (BAP1) as a scaffolding molecule for Rap small G protein GDP/GTP exchange protein at tight junctions.</title>
        <authorList>
            <person name="Mino A."/>
            <person name="Ohtsuka T."/>
            <person name="Inoue E."/>
            <person name="Takai Y."/>
        </authorList>
    </citation>
    <scope>INTERACTION WITH RAPGEF2</scope>
</reference>
<reference key="8">
    <citation type="journal article" date="2002" name="J. Biol. Chem.">
        <title>Interaction of two actin-binding proteins, synaptopodin and alpha-actinin-4, with the tight junction protein MAGI-1.</title>
        <authorList>
            <person name="Patrie K.M."/>
            <person name="Drescher A.J."/>
            <person name="Welihinda A."/>
            <person name="Mundel P."/>
            <person name="Margolis B."/>
        </authorList>
    </citation>
    <scope>INTERACTION WITH SYNPO AND ACTN4</scope>
</reference>
<reference key="9">
    <citation type="journal article" date="2003" name="Mol. Cell. Biol.">
        <title>JAM4, a junctional cell adhesion molecule interacting with a tight junction protein, MAGI-1.</title>
        <authorList>
            <person name="Hirabayashi S."/>
            <person name="Tajima M."/>
            <person name="Yao I."/>
            <person name="Nishimura W."/>
            <person name="Mori H."/>
            <person name="Hata Y."/>
        </authorList>
    </citation>
    <scope>INTERACTION WITH IGSF5</scope>
</reference>
<reference key="10">
    <citation type="journal article" date="2003" name="Oncogene">
        <title>Carom: a novel membrane-associated guanylate kinase-interacting protein with two SH3 domains.</title>
        <authorList>
            <person name="Ohno H."/>
            <person name="Hirabayashi S."/>
            <person name="Kansaku A."/>
            <person name="Yao I."/>
            <person name="Tajima M."/>
            <person name="Nishimura W."/>
            <person name="Ohnishi H."/>
            <person name="Mashima H."/>
            <person name="Fujita T."/>
            <person name="Omata M."/>
            <person name="Hata Y."/>
        </authorList>
    </citation>
    <scope>INTERACTION WITH FCHSD2</scope>
</reference>
<reference key="11">
    <citation type="journal article" date="2004" name="J. Biol. Chem.">
        <title>PSD-95 and Lin-7b interact with acid-sensing ion channel-3 and have opposite effects on H+- gated current.</title>
        <authorList>
            <person name="Hruska-Hageman A.M."/>
            <person name="Benson C.J."/>
            <person name="Leonard A.S."/>
            <person name="Price M.P."/>
            <person name="Welsh M.J."/>
        </authorList>
    </citation>
    <scope>INTERACTION WITH ASIC3</scope>
</reference>
<reference key="12">
    <citation type="journal article" date="2005" name="J. Biol. Chem.">
        <title>Angiomotin regulates endothelial cell-cell junctions and cell motility.</title>
        <authorList>
            <person name="Bratt A."/>
            <person name="Birot O."/>
            <person name="Sinha I."/>
            <person name="Veitonmaeki N."/>
            <person name="Aase K."/>
            <person name="Ernkvist M."/>
            <person name="Holmgren L."/>
        </authorList>
    </citation>
    <scope>INTERACTION WITH AMOT</scope>
</reference>
<reference key="13">
    <citation type="journal article" date="2006" name="J. Biochem.">
        <title>CIN85 is localized at synapses and forms a complex with S-SCAM via dendrin.</title>
        <authorList>
            <person name="Kawata A."/>
            <person name="Iida J."/>
            <person name="Ikeda M."/>
            <person name="Sato Y."/>
            <person name="Mori H."/>
            <person name="Kansaku A."/>
            <person name="Sumita K."/>
            <person name="Fujiwara N."/>
            <person name="Rokukawa C."/>
            <person name="Hamano M."/>
            <person name="Hirabayashi S."/>
            <person name="Hata Y."/>
        </authorList>
    </citation>
    <scope>INTERACTION WITH DDN</scope>
</reference>
<reference key="14">
    <citation type="journal article" date="2011" name="Sci. Signal.">
        <title>System-wide temporal characterization of the proteome and phosphoproteome of human embryonic stem cell differentiation.</title>
        <authorList>
            <person name="Rigbolt K.T."/>
            <person name="Prokhorova T.A."/>
            <person name="Akimov V."/>
            <person name="Henningsen J."/>
            <person name="Johansen P.T."/>
            <person name="Kratchmarova I."/>
            <person name="Kassem M."/>
            <person name="Mann M."/>
            <person name="Olsen J.V."/>
            <person name="Blagoev B."/>
        </authorList>
    </citation>
    <scope>PHOSPHORYLATION [LARGE SCALE ANALYSIS] AT SER-730; SER-741 AND SER-1361</scope>
    <scope>IDENTIFICATION BY MASS SPECTROMETRY [LARGE SCALE ANALYSIS]</scope>
</reference>
<reference key="15">
    <citation type="journal article" date="2013" name="J. Biol. Chem.">
        <title>Cellular localization and characterization of cytosolic binding partners for Gla domain-containing proteins PRRG4 and PRRG2.</title>
        <authorList>
            <person name="Yazicioglu M.N."/>
            <person name="Monaldini L."/>
            <person name="Chu K."/>
            <person name="Khazi F.R."/>
            <person name="Murphy S.L."/>
            <person name="Huang H."/>
            <person name="Margaritis P."/>
            <person name="High K.A."/>
        </authorList>
    </citation>
    <scope>INTERACTION WITH PRRG4</scope>
</reference>
<reference key="16">
    <citation type="journal article" date="2013" name="J. Proteome Res.">
        <title>Toward a comprehensive characterization of a human cancer cell phosphoproteome.</title>
        <authorList>
            <person name="Zhou H."/>
            <person name="Di Palma S."/>
            <person name="Preisinger C."/>
            <person name="Peng M."/>
            <person name="Polat A.N."/>
            <person name="Heck A.J."/>
            <person name="Mohammed S."/>
        </authorList>
    </citation>
    <scope>PHOSPHORYLATION [LARGE SCALE ANALYSIS] AT SER-1412</scope>
    <scope>IDENTIFICATION BY MASS SPECTROMETRY [LARGE SCALE ANALYSIS]</scope>
    <source>
        <tissue>Erythroleukemia</tissue>
    </source>
</reference>
<reference key="17">
    <citation type="journal article" date="2014" name="FEBS Lett.">
        <title>Mislocalization of K+ channels causes the renal salt wasting in EAST/SeSAME syndrome.</title>
        <authorList>
            <person name="Tanemoto M."/>
            <person name="Abe T."/>
            <person name="Uchida S."/>
            <person name="Kawahara K."/>
        </authorList>
    </citation>
    <scope>INTERACTION WITH KCNJ10</scope>
</reference>
<reference key="18">
    <citation type="journal article" date="2014" name="J. Proteomics">
        <title>An enzyme assisted RP-RPLC approach for in-depth analysis of human liver phosphoproteome.</title>
        <authorList>
            <person name="Bian Y."/>
            <person name="Song C."/>
            <person name="Cheng K."/>
            <person name="Dong M."/>
            <person name="Wang F."/>
            <person name="Huang J."/>
            <person name="Sun D."/>
            <person name="Wang L."/>
            <person name="Ye M."/>
            <person name="Zou H."/>
        </authorList>
    </citation>
    <scope>PHOSPHORYLATION [LARGE SCALE ANALYSIS] AT SER-357 AND SER-1071</scope>
    <scope>IDENTIFICATION BY MASS SPECTROMETRY [LARGE SCALE ANALYSIS]</scope>
    <source>
        <tissue>Liver</tissue>
    </source>
</reference>
<reference key="19">
    <citation type="submission" date="2008-04" db="PDB data bank">
        <title>Solution structure of WW domains from the human membrane-associated guanylate kinase, WW and PDZ domain-containing protein 1. MAGI-1.</title>
        <authorList>
            <consortium name="RIKEN structural genomics initiative (RSGI)"/>
        </authorList>
    </citation>
    <scope>STRUCTURE BY NMR OF 295-401</scope>
</reference>
<gene>
    <name type="primary">MAGI1</name>
    <name type="synonym">AIP3</name>
    <name type="synonym">BAIAP1</name>
    <name type="synonym">BAP1</name>
    <name type="synonym">TNRC19</name>
</gene>
<dbReference type="EMBL" id="AB010894">
    <property type="protein sequence ID" value="BAA32002.1"/>
    <property type="molecule type" value="mRNA"/>
</dbReference>
<dbReference type="EMBL" id="AF401655">
    <property type="protein sequence ID" value="AAK94065.1"/>
    <property type="molecule type" value="mRNA"/>
</dbReference>
<dbReference type="EMBL" id="AF401656">
    <property type="protein sequence ID" value="AAK94066.1"/>
    <property type="molecule type" value="mRNA"/>
</dbReference>
<dbReference type="EMBL" id="AF401654">
    <property type="protein sequence ID" value="AAK94064.1"/>
    <property type="molecule type" value="mRNA"/>
</dbReference>
<dbReference type="EMBL" id="AK289803">
    <property type="protein sequence ID" value="BAF82492.1"/>
    <property type="molecule type" value="mRNA"/>
</dbReference>
<dbReference type="EMBL" id="AC104438">
    <property type="status" value="NOT_ANNOTATED_CDS"/>
    <property type="molecule type" value="Genomic_DNA"/>
</dbReference>
<dbReference type="EMBL" id="AC112516">
    <property type="status" value="NOT_ANNOTATED_CDS"/>
    <property type="molecule type" value="Genomic_DNA"/>
</dbReference>
<dbReference type="EMBL" id="AC121493">
    <property type="status" value="NOT_ANNOTATED_CDS"/>
    <property type="molecule type" value="Genomic_DNA"/>
</dbReference>
<dbReference type="EMBL" id="AC145425">
    <property type="status" value="NOT_ANNOTATED_CDS"/>
    <property type="molecule type" value="Genomic_DNA"/>
</dbReference>
<dbReference type="EMBL" id="U80754">
    <property type="protein sequence ID" value="AAC04844.1"/>
    <property type="molecule type" value="mRNA"/>
</dbReference>
<dbReference type="EMBL" id="U96115">
    <property type="protein sequence ID" value="AAC51326.1"/>
    <property type="status" value="ALT_TERM"/>
    <property type="molecule type" value="mRNA"/>
</dbReference>
<dbReference type="CCDS" id="CCDS2904.1">
    <molecule id="Q96QZ7-3"/>
</dbReference>
<dbReference type="CCDS" id="CCDS33780.1">
    <molecule id="Q96QZ7-2"/>
</dbReference>
<dbReference type="CCDS" id="CCDS33781.1">
    <molecule id="Q96QZ7-5"/>
</dbReference>
<dbReference type="PIR" id="JE0209">
    <property type="entry name" value="JE0209"/>
</dbReference>
<dbReference type="RefSeq" id="NP_001028229.1">
    <molecule id="Q96QZ7-2"/>
    <property type="nucleotide sequence ID" value="NM_001033057.2"/>
</dbReference>
<dbReference type="RefSeq" id="NP_004733.2">
    <molecule id="Q96QZ7-3"/>
    <property type="nucleotide sequence ID" value="NM_004742.3"/>
</dbReference>
<dbReference type="RefSeq" id="NP_056335.1">
    <molecule id="Q96QZ7-5"/>
    <property type="nucleotide sequence ID" value="NM_015520.2"/>
</dbReference>
<dbReference type="RefSeq" id="XP_005265621.1">
    <property type="nucleotide sequence ID" value="XM_005265564.1"/>
</dbReference>
<dbReference type="PDB" id="1WBP">
    <property type="method" value="X-ray"/>
    <property type="resolution" value="2.40 A"/>
    <property type="chains" value="B=1382-1390"/>
</dbReference>
<dbReference type="PDB" id="2KPK">
    <property type="method" value="NMR"/>
    <property type="chains" value="A=455-580"/>
</dbReference>
<dbReference type="PDB" id="2KPL">
    <property type="method" value="NMR"/>
    <property type="chains" value="A=455-580"/>
</dbReference>
<dbReference type="PDB" id="2Q9V">
    <property type="method" value="X-ray"/>
    <property type="resolution" value="2.00 A"/>
    <property type="chains" value="A=839-922"/>
</dbReference>
<dbReference type="PDB" id="2R4H">
    <property type="method" value="X-ray"/>
    <property type="resolution" value="2.05 A"/>
    <property type="chains" value="A/B/C=1149-1233"/>
</dbReference>
<dbReference type="PDB" id="2YSD">
    <property type="method" value="NMR"/>
    <property type="chains" value="A=295-338"/>
</dbReference>
<dbReference type="PDB" id="2YSE">
    <property type="method" value="NMR"/>
    <property type="chains" value="A=355-401"/>
</dbReference>
<dbReference type="PDB" id="2ZAJ">
    <property type="method" value="NMR"/>
    <property type="chains" value="A=355-390"/>
</dbReference>
<dbReference type="PDB" id="3BPU">
    <property type="method" value="X-ray"/>
    <property type="resolution" value="1.60 A"/>
    <property type="chains" value="A=640-721"/>
</dbReference>
<dbReference type="PDB" id="5N7D">
    <property type="method" value="X-ray"/>
    <property type="resolution" value="2.30 A"/>
    <property type="chains" value="A/B=455-558"/>
</dbReference>
<dbReference type="PDB" id="5N7F">
    <property type="method" value="X-ray"/>
    <property type="resolution" value="2.30 A"/>
    <property type="chains" value="A/B=454-558"/>
</dbReference>
<dbReference type="PDB" id="5N7G">
    <property type="method" value="X-ray"/>
    <property type="resolution" value="2.95 A"/>
    <property type="chains" value="A/B=455-558"/>
</dbReference>
<dbReference type="PDB" id="6TWU">
    <property type="method" value="X-ray"/>
    <property type="resolution" value="2.40 A"/>
    <property type="chains" value="A/B=458-558"/>
</dbReference>
<dbReference type="PDB" id="6TWX">
    <property type="method" value="X-ray"/>
    <property type="resolution" value="2.30 A"/>
    <property type="chains" value="A/B=455-558"/>
</dbReference>
<dbReference type="PDB" id="6TWY">
    <property type="method" value="X-ray"/>
    <property type="resolution" value="2.30 A"/>
    <property type="chains" value="A/B=458-558"/>
</dbReference>
<dbReference type="PDB" id="7P71">
    <property type="method" value="X-ray"/>
    <property type="resolution" value="2.60 A"/>
    <property type="chains" value="A/B=455-558"/>
</dbReference>
<dbReference type="PDBsum" id="1WBP"/>
<dbReference type="PDBsum" id="2KPK"/>
<dbReference type="PDBsum" id="2KPL"/>
<dbReference type="PDBsum" id="2Q9V"/>
<dbReference type="PDBsum" id="2R4H"/>
<dbReference type="PDBsum" id="2YSD"/>
<dbReference type="PDBsum" id="2YSE"/>
<dbReference type="PDBsum" id="2ZAJ"/>
<dbReference type="PDBsum" id="3BPU"/>
<dbReference type="PDBsum" id="5N7D"/>
<dbReference type="PDBsum" id="5N7F"/>
<dbReference type="PDBsum" id="5N7G"/>
<dbReference type="PDBsum" id="6TWU"/>
<dbReference type="PDBsum" id="6TWX"/>
<dbReference type="PDBsum" id="6TWY"/>
<dbReference type="PDBsum" id="7P71"/>
<dbReference type="BMRB" id="Q96QZ7"/>
<dbReference type="PCDDB" id="Q96QZ7"/>
<dbReference type="SMR" id="Q96QZ7"/>
<dbReference type="BioGRID" id="114655">
    <property type="interactions" value="138"/>
</dbReference>
<dbReference type="ELM" id="Q96QZ7"/>
<dbReference type="FunCoup" id="Q96QZ7">
    <property type="interactions" value="1730"/>
</dbReference>
<dbReference type="IntAct" id="Q96QZ7">
    <property type="interactions" value="104"/>
</dbReference>
<dbReference type="MINT" id="Q96QZ7"/>
<dbReference type="STRING" id="9606.ENSP00000385450"/>
<dbReference type="ChEMBL" id="CHEMBL4295927"/>
<dbReference type="GlyGen" id="Q96QZ7">
    <property type="glycosylation" value="1 site, 1 O-linked glycan (1 site)"/>
</dbReference>
<dbReference type="iPTMnet" id="Q96QZ7"/>
<dbReference type="PhosphoSitePlus" id="Q96QZ7"/>
<dbReference type="BioMuta" id="MAGI1"/>
<dbReference type="DMDM" id="281185501"/>
<dbReference type="jPOST" id="Q96QZ7"/>
<dbReference type="MassIVE" id="Q96QZ7"/>
<dbReference type="PaxDb" id="9606-ENSP00000385450"/>
<dbReference type="PeptideAtlas" id="Q96QZ7"/>
<dbReference type="ProteomicsDB" id="77914">
    <molecule id="Q96QZ7-1"/>
</dbReference>
<dbReference type="ProteomicsDB" id="77915">
    <molecule id="Q96QZ7-2"/>
</dbReference>
<dbReference type="ProteomicsDB" id="77916">
    <molecule id="Q96QZ7-3"/>
</dbReference>
<dbReference type="ProteomicsDB" id="77917">
    <molecule id="Q96QZ7-4"/>
</dbReference>
<dbReference type="ProteomicsDB" id="77918">
    <molecule id="Q96QZ7-5"/>
</dbReference>
<dbReference type="ProteomicsDB" id="77919">
    <molecule id="Q96QZ7-6"/>
</dbReference>
<dbReference type="ProteomicsDB" id="77920">
    <molecule id="Q96QZ7-7"/>
</dbReference>
<dbReference type="Pumba" id="Q96QZ7"/>
<dbReference type="Antibodypedia" id="15389">
    <property type="antibodies" value="187 antibodies from 25 providers"/>
</dbReference>
<dbReference type="DNASU" id="9223"/>
<dbReference type="Ensembl" id="ENST00000330909.12">
    <molecule id="Q96QZ7-5"/>
    <property type="protein sequence ID" value="ENSP00000331157.7"/>
    <property type="gene ID" value="ENSG00000151276.24"/>
</dbReference>
<dbReference type="Ensembl" id="ENST00000402939.7">
    <molecule id="Q96QZ7-2"/>
    <property type="protein sequence ID" value="ENSP00000385450.2"/>
    <property type="gene ID" value="ENSG00000151276.24"/>
</dbReference>
<dbReference type="Ensembl" id="ENST00000483466.5">
    <molecule id="Q96QZ7-3"/>
    <property type="protein sequence ID" value="ENSP00000420323.1"/>
    <property type="gene ID" value="ENSG00000151276.24"/>
</dbReference>
<dbReference type="Ensembl" id="ENST00000497477.6">
    <molecule id="Q96QZ7-4"/>
    <property type="protein sequence ID" value="ENSP00000424369.1"/>
    <property type="gene ID" value="ENSG00000151276.24"/>
</dbReference>
<dbReference type="GeneID" id="9223"/>
<dbReference type="KEGG" id="hsa:9223"/>
<dbReference type="MANE-Select" id="ENST00000402939.7">
    <molecule id="Q96QZ7-2"/>
    <property type="protein sequence ID" value="ENSP00000385450.2"/>
    <property type="RefSeq nucleotide sequence ID" value="NM_001033057.2"/>
    <property type="RefSeq protein sequence ID" value="NP_001028229.1"/>
</dbReference>
<dbReference type="UCSC" id="uc003dmm.4">
    <molecule id="Q96QZ7-1"/>
    <property type="organism name" value="human"/>
</dbReference>
<dbReference type="AGR" id="HGNC:946"/>
<dbReference type="CTD" id="9223"/>
<dbReference type="DisGeNET" id="9223"/>
<dbReference type="GeneCards" id="MAGI1"/>
<dbReference type="HGNC" id="HGNC:946">
    <property type="gene designation" value="MAGI1"/>
</dbReference>
<dbReference type="HPA" id="ENSG00000151276">
    <property type="expression patterns" value="Low tissue specificity"/>
</dbReference>
<dbReference type="MalaCards" id="MAGI1"/>
<dbReference type="MIM" id="602625">
    <property type="type" value="gene"/>
</dbReference>
<dbReference type="neXtProt" id="NX_Q96QZ7"/>
<dbReference type="OpenTargets" id="ENSG00000151276"/>
<dbReference type="PharmGKB" id="PA164742006"/>
<dbReference type="VEuPathDB" id="HostDB:ENSG00000151276"/>
<dbReference type="eggNOG" id="KOG3209">
    <property type="taxonomic scope" value="Eukaryota"/>
</dbReference>
<dbReference type="GeneTree" id="ENSGT00940000155820"/>
<dbReference type="HOGENOM" id="CLU_004562_1_0_1"/>
<dbReference type="InParanoid" id="Q96QZ7"/>
<dbReference type="OMA" id="QYENPML"/>
<dbReference type="OrthoDB" id="66881at2759"/>
<dbReference type="PAN-GO" id="Q96QZ7">
    <property type="GO annotations" value="3 GO annotations based on evolutionary models"/>
</dbReference>
<dbReference type="PhylomeDB" id="Q96QZ7"/>
<dbReference type="TreeFam" id="TF316816"/>
<dbReference type="PathwayCommons" id="Q96QZ7"/>
<dbReference type="SignaLink" id="Q96QZ7"/>
<dbReference type="SIGNOR" id="Q96QZ7"/>
<dbReference type="BioGRID-ORCS" id="9223">
    <property type="hits" value="15 hits in 1151 CRISPR screens"/>
</dbReference>
<dbReference type="CD-CODE" id="DEE660B4">
    <property type="entry name" value="Stress granule"/>
</dbReference>
<dbReference type="ChiTaRS" id="MAGI1">
    <property type="organism name" value="human"/>
</dbReference>
<dbReference type="EvolutionaryTrace" id="Q96QZ7"/>
<dbReference type="GeneWiki" id="MAGI1"/>
<dbReference type="GenomeRNAi" id="9223"/>
<dbReference type="Pharos" id="Q96QZ7">
    <property type="development level" value="Tbio"/>
</dbReference>
<dbReference type="PRO" id="PR:Q96QZ7"/>
<dbReference type="Proteomes" id="UP000005640">
    <property type="component" value="Chromosome 3"/>
</dbReference>
<dbReference type="RNAct" id="Q96QZ7">
    <property type="molecule type" value="protein"/>
</dbReference>
<dbReference type="Bgee" id="ENSG00000151276">
    <property type="expression patterns" value="Expressed in ventricular zone and 112 other cell types or tissues"/>
</dbReference>
<dbReference type="ExpressionAtlas" id="Q96QZ7">
    <property type="expression patterns" value="baseline and differential"/>
</dbReference>
<dbReference type="GO" id="GO:0005912">
    <property type="term" value="C:adherens junction"/>
    <property type="evidence" value="ECO:0000250"/>
    <property type="project" value="UniProtKB"/>
</dbReference>
<dbReference type="GO" id="GO:0005923">
    <property type="term" value="C:bicellular tight junction"/>
    <property type="evidence" value="ECO:0007669"/>
    <property type="project" value="UniProtKB-SubCell"/>
</dbReference>
<dbReference type="GO" id="GO:0030054">
    <property type="term" value="C:cell junction"/>
    <property type="evidence" value="ECO:0000314"/>
    <property type="project" value="HPA"/>
</dbReference>
<dbReference type="GO" id="GO:0071944">
    <property type="term" value="C:cell periphery"/>
    <property type="evidence" value="ECO:0000314"/>
    <property type="project" value="ARUK-UCL"/>
</dbReference>
<dbReference type="GO" id="GO:0042995">
    <property type="term" value="C:cell projection"/>
    <property type="evidence" value="ECO:0000314"/>
    <property type="project" value="UniProtKB"/>
</dbReference>
<dbReference type="GO" id="GO:0005911">
    <property type="term" value="C:cell-cell junction"/>
    <property type="evidence" value="ECO:0000314"/>
    <property type="project" value="ARUK-UCL"/>
</dbReference>
<dbReference type="GO" id="GO:0005737">
    <property type="term" value="C:cytoplasm"/>
    <property type="evidence" value="ECO:0000314"/>
    <property type="project" value="UniProtKB"/>
</dbReference>
<dbReference type="GO" id="GO:0005730">
    <property type="term" value="C:nucleolus"/>
    <property type="evidence" value="ECO:0000314"/>
    <property type="project" value="HPA"/>
</dbReference>
<dbReference type="GO" id="GO:0005654">
    <property type="term" value="C:nucleoplasm"/>
    <property type="evidence" value="ECO:0000314"/>
    <property type="project" value="HPA"/>
</dbReference>
<dbReference type="GO" id="GO:0005886">
    <property type="term" value="C:plasma membrane"/>
    <property type="evidence" value="ECO:0000314"/>
    <property type="project" value="ARUK-UCL"/>
</dbReference>
<dbReference type="GO" id="GO:0051393">
    <property type="term" value="F:alpha-actinin binding"/>
    <property type="evidence" value="ECO:0000353"/>
    <property type="project" value="UniProtKB"/>
</dbReference>
<dbReference type="GO" id="GO:0005524">
    <property type="term" value="F:ATP binding"/>
    <property type="evidence" value="ECO:0007669"/>
    <property type="project" value="UniProtKB-KW"/>
</dbReference>
<dbReference type="GO" id="GO:0007155">
    <property type="term" value="P:cell adhesion"/>
    <property type="evidence" value="ECO:0000304"/>
    <property type="project" value="ProtInc"/>
</dbReference>
<dbReference type="GO" id="GO:0007166">
    <property type="term" value="P:cell surface receptor signaling pathway"/>
    <property type="evidence" value="ECO:0000304"/>
    <property type="project" value="ProtInc"/>
</dbReference>
<dbReference type="GO" id="GO:0001886">
    <property type="term" value="P:endothelial cell morphogenesis"/>
    <property type="evidence" value="ECO:0000250"/>
    <property type="project" value="UniProtKB"/>
</dbReference>
<dbReference type="GO" id="GO:0022409">
    <property type="term" value="P:positive regulation of cell-cell adhesion"/>
    <property type="evidence" value="ECO:0000314"/>
    <property type="project" value="ARUK-UCL"/>
</dbReference>
<dbReference type="GO" id="GO:0065003">
    <property type="term" value="P:protein-containing complex assembly"/>
    <property type="evidence" value="ECO:0000303"/>
    <property type="project" value="ProtInc"/>
</dbReference>
<dbReference type="GO" id="GO:0007165">
    <property type="term" value="P:signal transduction"/>
    <property type="evidence" value="ECO:0000318"/>
    <property type="project" value="GO_Central"/>
</dbReference>
<dbReference type="CDD" id="cd06731">
    <property type="entry name" value="PDZ1_MAGI-1_3-like"/>
    <property type="match status" value="1"/>
</dbReference>
<dbReference type="CDD" id="cd06732">
    <property type="entry name" value="PDZ2_MAGI-1_3-like"/>
    <property type="match status" value="1"/>
</dbReference>
<dbReference type="CDD" id="cd06733">
    <property type="entry name" value="PDZ3_MAGI-1_3-like"/>
    <property type="match status" value="1"/>
</dbReference>
<dbReference type="CDD" id="cd06734">
    <property type="entry name" value="PDZ4_MAGI-1_3-like"/>
    <property type="match status" value="1"/>
</dbReference>
<dbReference type="CDD" id="cd06735">
    <property type="entry name" value="PDZ5_MAGI-1_3-like"/>
    <property type="match status" value="1"/>
</dbReference>
<dbReference type="CDD" id="cd00201">
    <property type="entry name" value="WW"/>
    <property type="match status" value="2"/>
</dbReference>
<dbReference type="FunFam" id="2.30.42.10:FF:000005">
    <property type="entry name" value="Membrane associated guanylate kinase, WW and PDZ domain containing 1"/>
    <property type="match status" value="1"/>
</dbReference>
<dbReference type="FunFam" id="2.30.42.10:FF:000006">
    <property type="entry name" value="Membrane associated guanylate kinase, WW and PDZ domain containing 1"/>
    <property type="match status" value="1"/>
</dbReference>
<dbReference type="FunFam" id="2.30.42.10:FF:000012">
    <property type="entry name" value="Membrane associated guanylate kinase, WW and PDZ domain containing 1"/>
    <property type="match status" value="1"/>
</dbReference>
<dbReference type="FunFam" id="2.30.42.10:FF:000015">
    <property type="entry name" value="Membrane associated guanylate kinase, WW and PDZ domain containing 1"/>
    <property type="match status" value="1"/>
</dbReference>
<dbReference type="FunFam" id="2.20.70.10:FF:000001">
    <property type="entry name" value="Membrane-associated guanylate kinase, WW and PDZ domain-containing protein 1"/>
    <property type="match status" value="1"/>
</dbReference>
<dbReference type="FunFam" id="2.30.42.10:FF:000103">
    <property type="entry name" value="membrane-associated guanylate kinase, WW and PDZ domain-containing protein 1 isoform X2"/>
    <property type="match status" value="1"/>
</dbReference>
<dbReference type="FunFam" id="2.20.70.10:FF:000002">
    <property type="entry name" value="Membrane-associated guanylate kinase, WW and PDZ domain-containing protein 3 isoform 1"/>
    <property type="match status" value="1"/>
</dbReference>
<dbReference type="FunFam" id="2.30.42.10:FF:000042">
    <property type="entry name" value="Membrane-associated guanylate kinase, WW and PDZ domain-containing protein 3 isoform 1"/>
    <property type="match status" value="1"/>
</dbReference>
<dbReference type="FunFam" id="3.30.63.10:FF:000003">
    <property type="entry name" value="Membrane-associated guanylate kinase, WW and PDZ domain-containing protein 3 isoform 1"/>
    <property type="match status" value="1"/>
</dbReference>
<dbReference type="Gene3D" id="2.20.70.10">
    <property type="match status" value="2"/>
</dbReference>
<dbReference type="Gene3D" id="2.30.42.10">
    <property type="match status" value="6"/>
</dbReference>
<dbReference type="Gene3D" id="3.30.63.10">
    <property type="entry name" value="Guanylate Kinase phosphate binding domain"/>
    <property type="match status" value="1"/>
</dbReference>
<dbReference type="IDEAL" id="IID00420"/>
<dbReference type="InterPro" id="IPR008145">
    <property type="entry name" value="GK/Ca_channel_bsu"/>
</dbReference>
<dbReference type="InterPro" id="IPR008144">
    <property type="entry name" value="Guanylate_kin-like_dom"/>
</dbReference>
<dbReference type="InterPro" id="IPR020590">
    <property type="entry name" value="Guanylate_kinase_CS"/>
</dbReference>
<dbReference type="InterPro" id="IPR027417">
    <property type="entry name" value="P-loop_NTPase"/>
</dbReference>
<dbReference type="InterPro" id="IPR001478">
    <property type="entry name" value="PDZ"/>
</dbReference>
<dbReference type="InterPro" id="IPR036034">
    <property type="entry name" value="PDZ_sf"/>
</dbReference>
<dbReference type="InterPro" id="IPR001202">
    <property type="entry name" value="WW_dom"/>
</dbReference>
<dbReference type="InterPro" id="IPR036020">
    <property type="entry name" value="WW_dom_sf"/>
</dbReference>
<dbReference type="PANTHER" id="PTHR10316">
    <property type="entry name" value="MEMBRANE ASSOCIATED GUANYLATE KINASE-RELATED"/>
    <property type="match status" value="1"/>
</dbReference>
<dbReference type="PANTHER" id="PTHR10316:SF12">
    <property type="entry name" value="MEMBRANE-ASSOCIATED GUANYLATE KINASE, WW AND PDZ DOMAIN-CONTAINING PROTEIN 1"/>
    <property type="match status" value="1"/>
</dbReference>
<dbReference type="Pfam" id="PF00625">
    <property type="entry name" value="Guanylate_kin"/>
    <property type="match status" value="1"/>
</dbReference>
<dbReference type="Pfam" id="PF16663">
    <property type="entry name" value="MAGI_u1"/>
    <property type="match status" value="1"/>
</dbReference>
<dbReference type="Pfam" id="PF16666">
    <property type="entry name" value="MAGI_u5"/>
    <property type="match status" value="1"/>
</dbReference>
<dbReference type="Pfam" id="PF00595">
    <property type="entry name" value="PDZ"/>
    <property type="match status" value="5"/>
</dbReference>
<dbReference type="Pfam" id="PF00397">
    <property type="entry name" value="WW"/>
    <property type="match status" value="2"/>
</dbReference>
<dbReference type="SMART" id="SM00072">
    <property type="entry name" value="GuKc"/>
    <property type="match status" value="1"/>
</dbReference>
<dbReference type="SMART" id="SM00228">
    <property type="entry name" value="PDZ"/>
    <property type="match status" value="6"/>
</dbReference>
<dbReference type="SMART" id="SM00456">
    <property type="entry name" value="WW"/>
    <property type="match status" value="2"/>
</dbReference>
<dbReference type="SUPFAM" id="SSF52540">
    <property type="entry name" value="P-loop containing nucleoside triphosphate hydrolases"/>
    <property type="match status" value="1"/>
</dbReference>
<dbReference type="SUPFAM" id="SSF50156">
    <property type="entry name" value="PDZ domain-like"/>
    <property type="match status" value="6"/>
</dbReference>
<dbReference type="SUPFAM" id="SSF51045">
    <property type="entry name" value="WW domain"/>
    <property type="match status" value="2"/>
</dbReference>
<dbReference type="PROSITE" id="PS00856">
    <property type="entry name" value="GUANYLATE_KINASE_1"/>
    <property type="match status" value="1"/>
</dbReference>
<dbReference type="PROSITE" id="PS50052">
    <property type="entry name" value="GUANYLATE_KINASE_2"/>
    <property type="match status" value="1"/>
</dbReference>
<dbReference type="PROSITE" id="PS50106">
    <property type="entry name" value="PDZ"/>
    <property type="match status" value="6"/>
</dbReference>
<dbReference type="PROSITE" id="PS01159">
    <property type="entry name" value="WW_DOMAIN_1"/>
    <property type="match status" value="2"/>
</dbReference>
<dbReference type="PROSITE" id="PS50020">
    <property type="entry name" value="WW_DOMAIN_2"/>
    <property type="match status" value="2"/>
</dbReference>
<feature type="chain" id="PRO_0000094589" description="Membrane-associated guanylate kinase, WW and PDZ domain-containing protein 1">
    <location>
        <begin position="1"/>
        <end position="1491"/>
    </location>
</feature>
<feature type="domain" description="PDZ 1" evidence="5">
    <location>
        <begin position="17"/>
        <end position="105"/>
    </location>
</feature>
<feature type="domain" description="Guanylate kinase-like" evidence="4">
    <location>
        <begin position="96"/>
        <end position="287"/>
    </location>
</feature>
<feature type="domain" description="WW 1" evidence="6">
    <location>
        <begin position="300"/>
        <end position="333"/>
    </location>
</feature>
<feature type="domain" description="WW 2" evidence="6">
    <location>
        <begin position="359"/>
        <end position="392"/>
    </location>
</feature>
<feature type="domain" description="PDZ 2" evidence="5">
    <location>
        <begin position="472"/>
        <end position="554"/>
    </location>
</feature>
<feature type="domain" description="PDZ 3" evidence="5">
    <location>
        <begin position="643"/>
        <end position="721"/>
    </location>
</feature>
<feature type="domain" description="PDZ 4" evidence="5">
    <location>
        <begin position="813"/>
        <end position="895"/>
    </location>
</feature>
<feature type="domain" description="PDZ 5" evidence="5">
    <location>
        <begin position="970"/>
        <end position="1066"/>
    </location>
</feature>
<feature type="domain" description="PDZ 6" evidence="5">
    <location>
        <begin position="1124"/>
        <end position="1206"/>
    </location>
</feature>
<feature type="region of interest" description="Disordered" evidence="7">
    <location>
        <begin position="236"/>
        <end position="267"/>
    </location>
</feature>
<feature type="region of interest" description="Disordered" evidence="7">
    <location>
        <begin position="411"/>
        <end position="462"/>
    </location>
</feature>
<feature type="region of interest" description="Disordered" evidence="7">
    <location>
        <begin position="586"/>
        <end position="623"/>
    </location>
</feature>
<feature type="region of interest" description="Disordered" evidence="7">
    <location>
        <begin position="720"/>
        <end position="832"/>
    </location>
</feature>
<feature type="region of interest" description="Disordered" evidence="7">
    <location>
        <begin position="932"/>
        <end position="987"/>
    </location>
</feature>
<feature type="region of interest" description="Interaction with FCHSD2" evidence="12">
    <location>
        <begin position="970"/>
        <end position="1066"/>
    </location>
</feature>
<feature type="region of interest" description="Disordered" evidence="7">
    <location>
        <begin position="1112"/>
        <end position="1143"/>
    </location>
</feature>
<feature type="region of interest" description="Disordered" evidence="7">
    <location>
        <begin position="1234"/>
        <end position="1491"/>
    </location>
</feature>
<feature type="compositionally biased region" description="Low complexity" evidence="7">
    <location>
        <begin position="411"/>
        <end position="421"/>
    </location>
</feature>
<feature type="compositionally biased region" description="Pro residues" evidence="7">
    <location>
        <begin position="435"/>
        <end position="445"/>
    </location>
</feature>
<feature type="compositionally biased region" description="Polar residues" evidence="7">
    <location>
        <begin position="586"/>
        <end position="600"/>
    </location>
</feature>
<feature type="compositionally biased region" description="Low complexity" evidence="7">
    <location>
        <begin position="742"/>
        <end position="752"/>
    </location>
</feature>
<feature type="compositionally biased region" description="Polar residues" evidence="7">
    <location>
        <begin position="756"/>
        <end position="766"/>
    </location>
</feature>
<feature type="compositionally biased region" description="Polar residues" evidence="7">
    <location>
        <begin position="939"/>
        <end position="951"/>
    </location>
</feature>
<feature type="compositionally biased region" description="Gly residues" evidence="7">
    <location>
        <begin position="975"/>
        <end position="987"/>
    </location>
</feature>
<feature type="compositionally biased region" description="Polar residues" evidence="7">
    <location>
        <begin position="1112"/>
        <end position="1130"/>
    </location>
</feature>
<feature type="compositionally biased region" description="Basic and acidic residues" evidence="7">
    <location>
        <begin position="1278"/>
        <end position="1338"/>
    </location>
</feature>
<feature type="compositionally biased region" description="Basic and acidic residues" evidence="7">
    <location>
        <begin position="1354"/>
        <end position="1396"/>
    </location>
</feature>
<feature type="compositionally biased region" description="Basic and acidic residues" evidence="7">
    <location>
        <begin position="1403"/>
        <end position="1491"/>
    </location>
</feature>
<feature type="binding site" evidence="4">
    <location>
        <begin position="103"/>
        <end position="110"/>
    </location>
    <ligand>
        <name>ATP</name>
        <dbReference type="ChEBI" id="CHEBI:30616"/>
    </ligand>
</feature>
<feature type="modified residue" description="Phosphoserine" evidence="25">
    <location>
        <position position="357"/>
    </location>
</feature>
<feature type="modified residue" description="Phosphoserine" evidence="23">
    <location>
        <position position="730"/>
    </location>
</feature>
<feature type="modified residue" description="Phosphoserine" evidence="23">
    <location>
        <position position="741"/>
    </location>
</feature>
<feature type="modified residue" description="Phosphoserine" evidence="3">
    <location>
        <position position="800"/>
    </location>
</feature>
<feature type="modified residue" description="Phosphoserine" evidence="25">
    <location>
        <position position="1071"/>
    </location>
</feature>
<feature type="modified residue" description="Phosphoserine" evidence="23">
    <location>
        <position position="1361"/>
    </location>
</feature>
<feature type="modified residue" description="Phosphoserine" evidence="24">
    <location>
        <position position="1412"/>
    </location>
</feature>
<feature type="splice variant" id="VSP_011664" description="In isoform 2, isoform 4, isoform 6 and isoform 7." evidence="19">
    <original>PMSPSPASGLSKGEREREINSTNFGECPI</original>
    <variation>L</variation>
    <location>
        <begin position="806"/>
        <end position="834"/>
    </location>
</feature>
<feature type="splice variant" id="VSP_011665" description="In isoform 7." evidence="22">
    <original>GTTFAGNACVAMPHKIGRIIEGSPADRCGKLKVGDRILAVNGCSITNKSHSDIVNLIKEAGNTVTLRIIPGDESSNA</original>
    <variation>VMQCQPPSWCHSALGGSKHCNSVMGAASLEVQIYSCNNP</variation>
    <location>
        <begin position="1023"/>
        <end position="1099"/>
    </location>
</feature>
<feature type="splice variant" id="VSP_011666" description="In isoform 2, isoform 4, isoform 5 and isoform 6." evidence="19">
    <location>
        <position position="1027"/>
    </location>
</feature>
<feature type="splice variant" id="VSP_011667" description="In isoform 4 and isoform 6." evidence="19">
    <location>
        <begin position="1028"/>
        <end position="1038"/>
    </location>
</feature>
<feature type="splice variant" id="VSP_011668" description="In isoform 4." evidence="19">
    <location>
        <begin position="1039"/>
        <end position="1094"/>
    </location>
</feature>
<feature type="splice variant" id="VSP_011669" description="In isoform 5." evidence="19">
    <original>DPSSDRHGPATGPQGVPEVRAGPDRRQHPSLESSYPPDLHKSSPHGEK</original>
    <variation>AMIPPNIAACMRNEKLGEACFYLMGHNQTTTPAATATAPPPVHKVFRK</variation>
    <location>
        <begin position="1241"/>
        <end position="1288"/>
    </location>
</feature>
<feature type="splice variant" id="VSP_011670" description="In isoform 3 and isoform 4." evidence="19 20 21">
    <original>DPSSDRHGPATGPQGV</original>
    <variation>GGSNYENIPSFPGMTP</variation>
    <location>
        <begin position="1241"/>
        <end position="1256"/>
    </location>
</feature>
<feature type="splice variant" id="VSP_011671" description="In isoform 3 and isoform 4." evidence="19 20 21">
    <location>
        <begin position="1257"/>
        <end position="1288"/>
    </location>
</feature>
<feature type="splice variant" id="VSP_011672" description="In isoform 3, isoform 4 and isoform 5." evidence="19 20 21">
    <location>
        <begin position="1289"/>
        <end position="1491"/>
    </location>
</feature>
<feature type="sequence conflict" description="In Ref. 1; BAA32002 and 2; AAK94064/AAK94065/AAK94066/AAC51326." evidence="22" ref="1 2">
    <original>S</original>
    <variation>F</variation>
    <location>
        <position position="124"/>
    </location>
</feature>
<feature type="sequence conflict" description="In Ref. 3; BAF82492." evidence="22" ref="3">
    <original>D</original>
    <variation>H</variation>
    <location>
        <position position="428"/>
    </location>
</feature>
<feature type="sequence conflict" description="In Ref. 5; AAC04844." evidence="22" ref="5">
    <original>A</original>
    <variation>G</variation>
    <location>
        <position position="775"/>
    </location>
</feature>
<feature type="sequence conflict" description="In Ref. 3; BAF82492." evidence="22" ref="3">
    <original>I</original>
    <variation>T</variation>
    <location>
        <position position="1001"/>
    </location>
</feature>
<feature type="strand" evidence="30">
    <location>
        <begin position="304"/>
        <end position="310"/>
    </location>
</feature>
<feature type="strand" evidence="30">
    <location>
        <begin position="316"/>
        <end position="320"/>
    </location>
</feature>
<feature type="turn" evidence="30">
    <location>
        <begin position="321"/>
        <end position="324"/>
    </location>
</feature>
<feature type="strand" evidence="30">
    <location>
        <begin position="325"/>
        <end position="329"/>
    </location>
</feature>
<feature type="turn" evidence="30">
    <location>
        <begin position="331"/>
        <end position="333"/>
    </location>
</feature>
<feature type="strand" evidence="31">
    <location>
        <begin position="363"/>
        <end position="369"/>
    </location>
</feature>
<feature type="strand" evidence="31">
    <location>
        <begin position="371"/>
        <end position="373"/>
    </location>
</feature>
<feature type="strand" evidence="31">
    <location>
        <begin position="375"/>
        <end position="379"/>
    </location>
</feature>
<feature type="turn" evidence="31">
    <location>
        <begin position="380"/>
        <end position="383"/>
    </location>
</feature>
<feature type="strand" evidence="31">
    <location>
        <begin position="384"/>
        <end position="388"/>
    </location>
</feature>
<feature type="helix" evidence="31">
    <location>
        <begin position="390"/>
        <end position="398"/>
    </location>
</feature>
<feature type="helix" evidence="33">
    <location>
        <begin position="463"/>
        <end position="465"/>
    </location>
</feature>
<feature type="strand" evidence="33">
    <location>
        <begin position="468"/>
        <end position="476"/>
    </location>
</feature>
<feature type="strand" evidence="27">
    <location>
        <begin position="479"/>
        <end position="481"/>
    </location>
</feature>
<feature type="strand" evidence="33">
    <location>
        <begin position="483"/>
        <end position="487"/>
    </location>
</feature>
<feature type="strand" evidence="34">
    <location>
        <begin position="491"/>
        <end position="493"/>
    </location>
</feature>
<feature type="strand" evidence="33">
    <location>
        <begin position="497"/>
        <end position="501"/>
    </location>
</feature>
<feature type="strand" evidence="35">
    <location>
        <begin position="503"/>
        <end position="505"/>
    </location>
</feature>
<feature type="helix" evidence="33">
    <location>
        <begin position="506"/>
        <end position="510"/>
    </location>
</feature>
<feature type="strand" evidence="33">
    <location>
        <begin position="518"/>
        <end position="522"/>
    </location>
</feature>
<feature type="helix" evidence="33">
    <location>
        <begin position="532"/>
        <end position="541"/>
    </location>
</feature>
<feature type="strand" evidence="33">
    <location>
        <begin position="547"/>
        <end position="554"/>
    </location>
</feature>
<feature type="strand" evidence="26">
    <location>
        <begin position="568"/>
        <end position="570"/>
    </location>
</feature>
<feature type="strand" evidence="32">
    <location>
        <begin position="640"/>
        <end position="647"/>
    </location>
</feature>
<feature type="strand" evidence="32">
    <location>
        <begin position="652"/>
        <end position="654"/>
    </location>
</feature>
<feature type="strand" evidence="32">
    <location>
        <begin position="656"/>
        <end position="659"/>
    </location>
</feature>
<feature type="strand" evidence="32">
    <location>
        <begin position="663"/>
        <end position="670"/>
    </location>
</feature>
<feature type="strand" evidence="32">
    <location>
        <begin position="685"/>
        <end position="689"/>
    </location>
</feature>
<feature type="helix" evidence="32">
    <location>
        <begin position="699"/>
        <end position="707"/>
    </location>
</feature>
<feature type="strand" evidence="32">
    <location>
        <begin position="714"/>
        <end position="721"/>
    </location>
</feature>
<feature type="strand" evidence="28">
    <location>
        <begin position="839"/>
        <end position="845"/>
    </location>
</feature>
<feature type="strand" evidence="28">
    <location>
        <begin position="853"/>
        <end position="857"/>
    </location>
</feature>
<feature type="strand" evidence="28">
    <location>
        <begin position="865"/>
        <end position="870"/>
    </location>
</feature>
<feature type="helix" evidence="28">
    <location>
        <begin position="875"/>
        <end position="879"/>
    </location>
</feature>
<feature type="strand" evidence="28">
    <location>
        <begin position="887"/>
        <end position="891"/>
    </location>
</feature>
<feature type="helix" evidence="28">
    <location>
        <begin position="901"/>
        <end position="914"/>
    </location>
</feature>
<feature type="strand" evidence="28">
    <location>
        <begin position="916"/>
        <end position="922"/>
    </location>
</feature>
<feature type="strand" evidence="29">
    <location>
        <begin position="1150"/>
        <end position="1156"/>
    </location>
</feature>
<feature type="strand" evidence="29">
    <location>
        <begin position="1163"/>
        <end position="1168"/>
    </location>
</feature>
<feature type="helix" evidence="29">
    <location>
        <begin position="1170"/>
        <end position="1172"/>
    </location>
</feature>
<feature type="strand" evidence="29">
    <location>
        <begin position="1176"/>
        <end position="1181"/>
    </location>
</feature>
<feature type="helix" evidence="29">
    <location>
        <begin position="1186"/>
        <end position="1189"/>
    </location>
</feature>
<feature type="strand" evidence="29">
    <location>
        <begin position="1198"/>
        <end position="1202"/>
    </location>
</feature>
<feature type="helix" evidence="29">
    <location>
        <begin position="1212"/>
        <end position="1220"/>
    </location>
</feature>
<feature type="turn" evidence="29">
    <location>
        <begin position="1221"/>
        <end position="1224"/>
    </location>
</feature>
<feature type="strand" evidence="29">
    <location>
        <begin position="1225"/>
        <end position="1231"/>
    </location>
</feature>
<proteinExistence type="evidence at protein level"/>
<protein>
    <recommendedName>
        <fullName>Membrane-associated guanylate kinase, WW and PDZ domain-containing protein 1</fullName>
    </recommendedName>
    <alternativeName>
        <fullName>Atrophin-1-interacting protein 3</fullName>
        <shortName>AIP-3</shortName>
    </alternativeName>
    <alternativeName>
        <fullName>BAI1-associated protein 1</fullName>
        <shortName>BAP-1</shortName>
    </alternativeName>
    <alternativeName>
        <fullName>Membrane-associated guanylate kinase inverted 1</fullName>
        <shortName>MAGI-1</shortName>
    </alternativeName>
    <alternativeName>
        <fullName>Trinucleotide repeat-containing gene 19 protein</fullName>
    </alternativeName>
    <alternativeName>
        <fullName>WW domain-containing protein 3</fullName>
        <shortName>WWP3</shortName>
    </alternativeName>
</protein>
<name>MAGI1_HUMAN</name>
<sequence length="1491" mass="164581">MSKVIQKKNHWTSRVHECTVKRGPQGELGVTVLGGAEHGEFPYVGAVAAVEAAGLPGGGEGPRLGEGELLLEVQGVRVSGLPRYDVLGVIDSCKEAVTFKAVRQGGRLNKDLRHFLNQRFQKGSPDHELQQTIRDNLYRHAVPCTTRSPREGEVPGVDYNFLTVKEFLDLEQSGTLLEVGTYEGNYYGTPKPPSQPVSGKVITTDALHSLQSGSKQSTPKRTKSYNDMQNAGIVHAENEEEDDVPEMNSSFTADSGEQEEHTLQETALPPVNSSIIAAPITDPSQKFPQYLPLSAEDNLGPLPENWEMAYTENGEVYFIDHNTKTTSWLDPRCLNKQQKPLEECEDDEGVHTEELDSELELPAGWEKIEDPVYGIYYVDHINRKTQYENPVLEAKRKKQLEQQQQQQQQQQQQQQQQQQQQTEEWTEDHSALVPPVIPNHPPSNPEPAREVPLQGKPFFTRNPSELKGKFIHTKLRKSSRGFGFTVVGGDEPDEFLQIKSLVLDGPAALDGKMETGDVIVSVNDTCVLGHTHAQVVKIFQSIPIGASVDLELCRGYPLPFDPDDPNTSLVTSVAILDKEPIIVNGQETYDSPASHSSKTGKVNGMKDARPSSPADVASNSSHGYPNDTVSLASSIATQPELITVHIVKGPMGFGFTIADSPGGGGQRVKQIVDSPRCRGLKEGDLIVEVNKKNVQALTHNQVVDMLVECPKGSEVTLLVQRGGLPVPKKSPKSQPLERKDSQNSSQHSVSSHRSLHTASPSHSTQVLPEFPPAEAQAPDQTDSSGQKKPDPFKIWAQSRSMYENRPMSPSPASGLSKGEREREINSTNFGECPIPDYQEQDIFLWRKETGFGFRILGGNEPGEPIYIGHIVPLGAADTDGRLRSGDELICVDGTPVIGKSHQLVVQLMQQAAKQGHVNLTVRRKVVFAVPKTENEVPSPASSHHSSNQPASLTEEKRTPQGSQNSLNTVSSGSGSTSGIGSGGGGGSGVVSTVVQPYDVEIRRGENEGFGFVIVSSVSRPEAGTTFAGNACVAMPHKIGRIIEGSPADRCGKLKVGDRILAVNGCSITNKSHSDIVNLIKEAGNTVTLRIIPGDESSNATLLTNAEKIATITTTHTPSQQGTQETRNTTKPKQESQFEFKAPQATQEQDFYTVELERGAKGFGFSLRGGREYNMDLYVLRLAEDGPAERCGKMRIGDEILEINGETTKNMKHSRAIELIKNGGRRVRLFLKRGDGSVPEYDPSSDRHGPATGPQGVPEVRAGPDRRQHPSLESSYPPDLHKSSPHGEKRAHARDPKGSREYSRQPNEHHTWNGTSRKPDSGACRPKDRAPEGRRDAQAERAAAANGPKRRSPEKRREGTRSADNTLERREKHEKRRDVSPERRRERSPTRRRDGSPSRRRRSLERLLEQRRSPERRRGGSPERRAKSTDRRRARSPERRRERSLDKRNREDRASHREREEANLKQDAGRSSRHPPEQRRRPYKECSTDLSI</sequence>
<evidence type="ECO:0000250" key="1"/>
<evidence type="ECO:0000250" key="2">
    <source>
        <dbReference type="UniProtKB" id="Q4L1J4"/>
    </source>
</evidence>
<evidence type="ECO:0000250" key="3">
    <source>
        <dbReference type="UniProtKB" id="Q6RHR9"/>
    </source>
</evidence>
<evidence type="ECO:0000255" key="4">
    <source>
        <dbReference type="PROSITE-ProRule" id="PRU00100"/>
    </source>
</evidence>
<evidence type="ECO:0000255" key="5">
    <source>
        <dbReference type="PROSITE-ProRule" id="PRU00143"/>
    </source>
</evidence>
<evidence type="ECO:0000255" key="6">
    <source>
        <dbReference type="PROSITE-ProRule" id="PRU00224"/>
    </source>
</evidence>
<evidence type="ECO:0000256" key="7">
    <source>
        <dbReference type="SAM" id="MobiDB-lite"/>
    </source>
</evidence>
<evidence type="ECO:0000269" key="8">
    <source>
    </source>
</evidence>
<evidence type="ECO:0000269" key="9">
    <source>
    </source>
</evidence>
<evidence type="ECO:0000269" key="10">
    <source>
    </source>
</evidence>
<evidence type="ECO:0000269" key="11">
    <source>
    </source>
</evidence>
<evidence type="ECO:0000269" key="12">
    <source>
    </source>
</evidence>
<evidence type="ECO:0000269" key="13">
    <source>
    </source>
</evidence>
<evidence type="ECO:0000269" key="14">
    <source>
    </source>
</evidence>
<evidence type="ECO:0000269" key="15">
    <source>
    </source>
</evidence>
<evidence type="ECO:0000269" key="16">
    <source>
    </source>
</evidence>
<evidence type="ECO:0000269" key="17">
    <source>
    </source>
</evidence>
<evidence type="ECO:0000269" key="18">
    <source>
    </source>
</evidence>
<evidence type="ECO:0000303" key="19">
    <source>
    </source>
</evidence>
<evidence type="ECO:0000303" key="20">
    <source>
    </source>
</evidence>
<evidence type="ECO:0000303" key="21">
    <source>
    </source>
</evidence>
<evidence type="ECO:0000305" key="22"/>
<evidence type="ECO:0007744" key="23">
    <source>
    </source>
</evidence>
<evidence type="ECO:0007744" key="24">
    <source>
    </source>
</evidence>
<evidence type="ECO:0007744" key="25">
    <source>
    </source>
</evidence>
<evidence type="ECO:0007829" key="26">
    <source>
        <dbReference type="PDB" id="2KPK"/>
    </source>
</evidence>
<evidence type="ECO:0007829" key="27">
    <source>
        <dbReference type="PDB" id="2KPL"/>
    </source>
</evidence>
<evidence type="ECO:0007829" key="28">
    <source>
        <dbReference type="PDB" id="2Q9V"/>
    </source>
</evidence>
<evidence type="ECO:0007829" key="29">
    <source>
        <dbReference type="PDB" id="2R4H"/>
    </source>
</evidence>
<evidence type="ECO:0007829" key="30">
    <source>
        <dbReference type="PDB" id="2YSD"/>
    </source>
</evidence>
<evidence type="ECO:0007829" key="31">
    <source>
        <dbReference type="PDB" id="2YSE"/>
    </source>
</evidence>
<evidence type="ECO:0007829" key="32">
    <source>
        <dbReference type="PDB" id="3BPU"/>
    </source>
</evidence>
<evidence type="ECO:0007829" key="33">
    <source>
        <dbReference type="PDB" id="5N7D"/>
    </source>
</evidence>
<evidence type="ECO:0007829" key="34">
    <source>
        <dbReference type="PDB" id="6TWX"/>
    </source>
</evidence>
<evidence type="ECO:0007829" key="35">
    <source>
        <dbReference type="PDB" id="7P71"/>
    </source>
</evidence>
<organism>
    <name type="scientific">Homo sapiens</name>
    <name type="common">Human</name>
    <dbReference type="NCBI Taxonomy" id="9606"/>
    <lineage>
        <taxon>Eukaryota</taxon>
        <taxon>Metazoa</taxon>
        <taxon>Chordata</taxon>
        <taxon>Craniata</taxon>
        <taxon>Vertebrata</taxon>
        <taxon>Euteleostomi</taxon>
        <taxon>Mammalia</taxon>
        <taxon>Eutheria</taxon>
        <taxon>Euarchontoglires</taxon>
        <taxon>Primates</taxon>
        <taxon>Haplorrhini</taxon>
        <taxon>Catarrhini</taxon>
        <taxon>Hominidae</taxon>
        <taxon>Homo</taxon>
    </lineage>
</organism>
<accession>Q96QZ7</accession>
<accession>A8K188</accession>
<accession>O00309</accession>
<accession>O43863</accession>
<accession>O75085</accession>
<accession>Q96QZ8</accession>
<accession>Q96QZ9</accession>